<sequence length="492" mass="55651">MAAGERSWCLCKLLRFFYSLFFPGLIVCGTLCVCLVIVLWGIRLLLQRKKKLVSTSKNGKNQMVIAFFHPYCNAGGGGERVLWCALRALQKKYPEAVYVVYTGDVNVNGQQILEGAFRRFNIRLIHPVQFVFLRKRYLVEDSLYPHFTLLGQSLGSIFLGWEALMQCVPDVYIDSMGYAFTLPLFKYIGGCQVGSYVHYPTISTDMLSVVKNQNIGFNNAAFITRNPFLSKVKLIYYYLFAFIYGLVGSCSDVVMVNSSWTLNHILSLWKVGNCTNIVYPPCDVQTFLDIPLHEKKMTPGHLLVSVGQFRPEKNHPLQIRAFAKLLNKKMVESPPSLKLVLIGGCRNKDDELRVNQLRRLSEDLGVQEYVEFKINIPFDELKNYLSEATIGLHTMWNEHFGIGVVECMAAGTIILAHNSGGPKLDIVVPHEGDITGFLAESEEDYAETIAHILSMSAEKRLQIRKSARASVSRFSDQEFEVTFLSSVEKLFK</sequence>
<feature type="chain" id="PRO_0000295616" description="GDP-Man:Man(3)GlcNAc(2)-PP-Dol alpha-1,2-mannosyltransferase">
    <location>
        <begin position="1"/>
        <end position="492"/>
    </location>
</feature>
<feature type="topological domain" description="Lumenal" evidence="1">
    <location>
        <begin position="1"/>
        <end position="19"/>
    </location>
</feature>
<feature type="transmembrane region" description="Helical" evidence="2">
    <location>
        <begin position="20"/>
        <end position="40"/>
    </location>
</feature>
<feature type="topological domain" description="Cytoplasmic" evidence="1">
    <location>
        <begin position="41"/>
        <end position="233"/>
    </location>
</feature>
<feature type="intramembrane region" description="Helical" evidence="2">
    <location>
        <begin position="234"/>
        <end position="254"/>
    </location>
</feature>
<feature type="topological domain" description="Cytoplasmic" evidence="1">
    <location>
        <begin position="255"/>
        <end position="399"/>
    </location>
</feature>
<feature type="intramembrane region" description="Helical" evidence="2">
    <location>
        <begin position="400"/>
        <end position="420"/>
    </location>
</feature>
<feature type="topological domain" description="Cytoplasmic" evidence="1">
    <location>
        <begin position="421"/>
        <end position="492"/>
    </location>
</feature>
<feature type="sequence variant" id="VAR_064908" description="In CDG1P; no effect on protein expression; no effect on localization to endoplasmic reticulum membrane; decreased GDP-Man:Man3GlcNAc2-PP-Dol alpha-1,2-mannosyltransferase activity; dbSNP:rs267606652." evidence="4">
    <original>L</original>
    <variation>S</variation>
    <location>
        <position position="86"/>
    </location>
</feature>
<feature type="sequence variant" id="VAR_055902" description="In dbSNP:rs17480245.">
    <original>N</original>
    <variation>S</variation>
    <location>
        <position position="108"/>
    </location>
</feature>
<feature type="sequence variant" id="VAR_068070" description="In CDG1P; dbSNP:rs387907181." evidence="5">
    <original>Y</original>
    <variation>S</variation>
    <location>
        <position position="279"/>
    </location>
</feature>
<feature type="sequence variant" id="VAR_068071" description="In CDG1P; no effect on protein expression; dbSNP:rs387907184." evidence="5">
    <original>Q</original>
    <variation>P</variation>
    <location>
        <position position="318"/>
    </location>
</feature>
<feature type="sequence variant" id="VAR_068072" description="In CDG1P; no effect on protein expression; dbSNP:rs387907182." evidence="5">
    <original>L</original>
    <variation>S</variation>
    <location>
        <position position="381"/>
    </location>
</feature>
<feature type="sequence variant" id="VAR_068073" description="In CDG1P; no effect on protein expression; dbSNP:rs387907183." evidence="5">
    <original>E</original>
    <variation>K</variation>
    <location>
        <position position="398"/>
    </location>
</feature>
<feature type="mutagenesis site" description="No effect on GDP-Man:Man3GlcNAc2-PP-Dol alpha-1,2-mannosyltransferase activity." evidence="4">
    <original>L</original>
    <variation>A</variation>
    <location>
        <position position="86"/>
    </location>
</feature>
<feature type="mutagenesis site" description="Decreased GDP-Man:Man3GlcNAc2-PP-Dol alpha-1,2-mannosyltransferase activity." evidence="4">
    <original>L</original>
    <variation>P</variation>
    <location>
        <position position="86"/>
    </location>
</feature>
<feature type="sequence conflict" description="In Ref. 3; AAI42999." evidence="6" ref="3">
    <original>A</original>
    <variation>V</variation>
    <location>
        <position position="96"/>
    </location>
</feature>
<dbReference type="EC" id="2.4.1.131" evidence="4"/>
<dbReference type="EMBL" id="AK296747">
    <property type="protein sequence ID" value="BAG59331.1"/>
    <property type="molecule type" value="mRNA"/>
</dbReference>
<dbReference type="EMBL" id="AL139082">
    <property type="status" value="NOT_ANNOTATED_CDS"/>
    <property type="molecule type" value="Genomic_DNA"/>
</dbReference>
<dbReference type="EMBL" id="BC073862">
    <property type="protein sequence ID" value="AAH73862.1"/>
    <property type="molecule type" value="mRNA"/>
</dbReference>
<dbReference type="EMBL" id="BC010857">
    <property type="protein sequence ID" value="AAH10857.3"/>
    <property type="molecule type" value="mRNA"/>
</dbReference>
<dbReference type="EMBL" id="BC111022">
    <property type="protein sequence ID" value="AAI11023.1"/>
    <property type="status" value="ALT_SEQ"/>
    <property type="molecule type" value="mRNA"/>
</dbReference>
<dbReference type="EMBL" id="BC142998">
    <property type="protein sequence ID" value="AAI42999.1"/>
    <property type="molecule type" value="mRNA"/>
</dbReference>
<dbReference type="CCDS" id="CCDS31977.1"/>
<dbReference type="RefSeq" id="NP_001004127.2">
    <property type="nucleotide sequence ID" value="NM_001004127.3"/>
</dbReference>
<dbReference type="SMR" id="Q2TAA5"/>
<dbReference type="BioGRID" id="136328">
    <property type="interactions" value="98"/>
</dbReference>
<dbReference type="FunCoup" id="Q2TAA5">
    <property type="interactions" value="2350"/>
</dbReference>
<dbReference type="IntAct" id="Q2TAA5">
    <property type="interactions" value="52"/>
</dbReference>
<dbReference type="STRING" id="9606.ENSP00000430236"/>
<dbReference type="CAZy" id="GT4">
    <property type="family name" value="Glycosyltransferase Family 4"/>
</dbReference>
<dbReference type="GlyCosmos" id="Q2TAA5">
    <property type="glycosylation" value="2 sites, No reported glycans"/>
</dbReference>
<dbReference type="GlyGen" id="Q2TAA5">
    <property type="glycosylation" value="2 sites, 1 O-linked glycan (1 site)"/>
</dbReference>
<dbReference type="iPTMnet" id="Q2TAA5"/>
<dbReference type="PhosphoSitePlus" id="Q2TAA5"/>
<dbReference type="SwissPalm" id="Q2TAA5"/>
<dbReference type="BioMuta" id="ALG11"/>
<dbReference type="DMDM" id="156631015"/>
<dbReference type="jPOST" id="Q2TAA5"/>
<dbReference type="MassIVE" id="Q2TAA5"/>
<dbReference type="PaxDb" id="9606-ENSP00000430236"/>
<dbReference type="PeptideAtlas" id="Q2TAA5"/>
<dbReference type="ProteomicsDB" id="61454"/>
<dbReference type="Pumba" id="Q2TAA5"/>
<dbReference type="Antibodypedia" id="49847">
    <property type="antibodies" value="203 antibodies from 19 providers"/>
</dbReference>
<dbReference type="DNASU" id="440138"/>
<dbReference type="Ensembl" id="ENST00000521508.2">
    <property type="protein sequence ID" value="ENSP00000430236.1"/>
    <property type="gene ID" value="ENSG00000253710.5"/>
</dbReference>
<dbReference type="GeneID" id="440138"/>
<dbReference type="KEGG" id="hsa:440138"/>
<dbReference type="MANE-Select" id="ENST00000521508.2">
    <property type="protein sequence ID" value="ENSP00000430236.1"/>
    <property type="RefSeq nucleotide sequence ID" value="NM_001004127.3"/>
    <property type="RefSeq protein sequence ID" value="NP_001004127.2"/>
</dbReference>
<dbReference type="UCSC" id="uc001vga.4">
    <property type="organism name" value="human"/>
</dbReference>
<dbReference type="AGR" id="HGNC:32456"/>
<dbReference type="CTD" id="440138"/>
<dbReference type="DisGeNET" id="440138"/>
<dbReference type="GeneCards" id="ALG11"/>
<dbReference type="GeneReviews" id="ALG11"/>
<dbReference type="HGNC" id="HGNC:32456">
    <property type="gene designation" value="ALG11"/>
</dbReference>
<dbReference type="HPA" id="ENSG00000253710">
    <property type="expression patterns" value="Low tissue specificity"/>
</dbReference>
<dbReference type="MalaCards" id="ALG11"/>
<dbReference type="MIM" id="613661">
    <property type="type" value="phenotype"/>
</dbReference>
<dbReference type="MIM" id="613666">
    <property type="type" value="gene"/>
</dbReference>
<dbReference type="neXtProt" id="NX_Q2TAA5"/>
<dbReference type="OpenTargets" id="ENSG00000253710"/>
<dbReference type="Orphanet" id="280071">
    <property type="disease" value="ALG11-CDG"/>
</dbReference>
<dbReference type="VEuPathDB" id="HostDB:ENSG00000253710"/>
<dbReference type="eggNOG" id="KOG1387">
    <property type="taxonomic scope" value="Eukaryota"/>
</dbReference>
<dbReference type="GeneTree" id="ENSGT00550000075118"/>
<dbReference type="HOGENOM" id="CLU_017896_2_0_1"/>
<dbReference type="InParanoid" id="Q2TAA5"/>
<dbReference type="OMA" id="ARLYGWV"/>
<dbReference type="OrthoDB" id="2276068at2759"/>
<dbReference type="PAN-GO" id="Q2TAA5">
    <property type="GO annotations" value="4 GO annotations based on evolutionary models"/>
</dbReference>
<dbReference type="PhylomeDB" id="Q2TAA5"/>
<dbReference type="TreeFam" id="TF313056"/>
<dbReference type="BRENDA" id="2.4.1.131">
    <property type="organism ID" value="2681"/>
</dbReference>
<dbReference type="PathwayCommons" id="Q2TAA5"/>
<dbReference type="Reactome" id="R-HSA-446193">
    <property type="pathway name" value="Biosynthesis of the N-glycan precursor (dolichol lipid-linked oligosaccharide, LLO) and transfer to a nascent protein"/>
</dbReference>
<dbReference type="Reactome" id="R-HSA-4551295">
    <property type="pathway name" value="Defective ALG11 causes CDG-1p"/>
</dbReference>
<dbReference type="SignaLink" id="Q2TAA5"/>
<dbReference type="SIGNOR" id="Q2TAA5"/>
<dbReference type="UniPathway" id="UPA00378"/>
<dbReference type="BioGRID-ORCS" id="440138">
    <property type="hits" value="793 hits in 1169 CRISPR screens"/>
</dbReference>
<dbReference type="ChiTaRS" id="ALG11">
    <property type="organism name" value="human"/>
</dbReference>
<dbReference type="GeneWiki" id="ALG11"/>
<dbReference type="GenomeRNAi" id="440138"/>
<dbReference type="Pharos" id="Q2TAA5">
    <property type="development level" value="Tbio"/>
</dbReference>
<dbReference type="PRO" id="PR:Q2TAA5"/>
<dbReference type="Proteomes" id="UP000005640">
    <property type="component" value="Chromosome 13"/>
</dbReference>
<dbReference type="RNAct" id="Q2TAA5">
    <property type="molecule type" value="protein"/>
</dbReference>
<dbReference type="Bgee" id="ENSG00000253710">
    <property type="expression patterns" value="Expressed in islet of Langerhans and 113 other cell types or tissues"/>
</dbReference>
<dbReference type="ExpressionAtlas" id="Q2TAA5">
    <property type="expression patterns" value="baseline and differential"/>
</dbReference>
<dbReference type="GO" id="GO:0005789">
    <property type="term" value="C:endoplasmic reticulum membrane"/>
    <property type="evidence" value="ECO:0000314"/>
    <property type="project" value="UniProtKB"/>
</dbReference>
<dbReference type="GO" id="GO:0016020">
    <property type="term" value="C:membrane"/>
    <property type="evidence" value="ECO:0007005"/>
    <property type="project" value="UniProtKB"/>
</dbReference>
<dbReference type="GO" id="GO:0000026">
    <property type="term" value="F:alpha-1,2-mannosyltransferase activity"/>
    <property type="evidence" value="ECO:0000304"/>
    <property type="project" value="Reactome"/>
</dbReference>
<dbReference type="GO" id="GO:0004377">
    <property type="term" value="F:GDP-Man:Man3GlcNAc2-PP-Dol alpha-1,2-mannosyltransferase activity"/>
    <property type="evidence" value="ECO:0000314"/>
    <property type="project" value="UniProtKB"/>
</dbReference>
<dbReference type="GO" id="GO:0006488">
    <property type="term" value="P:dolichol-linked oligosaccharide biosynthetic process"/>
    <property type="evidence" value="ECO:0000315"/>
    <property type="project" value="UniProtKB"/>
</dbReference>
<dbReference type="GO" id="GO:0006487">
    <property type="term" value="P:protein N-linked glycosylation"/>
    <property type="evidence" value="ECO:0000315"/>
    <property type="project" value="UniProtKB"/>
</dbReference>
<dbReference type="CDD" id="cd03806">
    <property type="entry name" value="GT4_ALG11-like"/>
    <property type="match status" value="1"/>
</dbReference>
<dbReference type="FunFam" id="3.40.50.2000:FF:000076">
    <property type="entry name" value="GDP-Man:Man(3)GlcNAc(2)-PP-Dol alpha-1,2-mannosyltransferase"/>
    <property type="match status" value="1"/>
</dbReference>
<dbReference type="Gene3D" id="3.40.50.2000">
    <property type="entry name" value="Glycogen Phosphorylase B"/>
    <property type="match status" value="1"/>
</dbReference>
<dbReference type="InterPro" id="IPR038013">
    <property type="entry name" value="ALG11"/>
</dbReference>
<dbReference type="InterPro" id="IPR031814">
    <property type="entry name" value="ALG11_N"/>
</dbReference>
<dbReference type="InterPro" id="IPR001296">
    <property type="entry name" value="Glyco_trans_1"/>
</dbReference>
<dbReference type="PANTHER" id="PTHR45919">
    <property type="entry name" value="GDP-MAN:MAN(3)GLCNAC(2)-PP-DOL ALPHA-1,2-MANNOSYLTRANSFERASE"/>
    <property type="match status" value="1"/>
</dbReference>
<dbReference type="PANTHER" id="PTHR45919:SF1">
    <property type="entry name" value="GDP-MAN:MAN(3)GLCNAC(2)-PP-DOL ALPHA-1,2-MANNOSYLTRANSFERASE"/>
    <property type="match status" value="1"/>
</dbReference>
<dbReference type="Pfam" id="PF15924">
    <property type="entry name" value="ALG11_N"/>
    <property type="match status" value="1"/>
</dbReference>
<dbReference type="Pfam" id="PF00534">
    <property type="entry name" value="Glycos_transf_1"/>
    <property type="match status" value="1"/>
</dbReference>
<dbReference type="SUPFAM" id="SSF53756">
    <property type="entry name" value="UDP-Glycosyltransferase/glycogen phosphorylase"/>
    <property type="match status" value="1"/>
</dbReference>
<organism>
    <name type="scientific">Homo sapiens</name>
    <name type="common">Human</name>
    <dbReference type="NCBI Taxonomy" id="9606"/>
    <lineage>
        <taxon>Eukaryota</taxon>
        <taxon>Metazoa</taxon>
        <taxon>Chordata</taxon>
        <taxon>Craniata</taxon>
        <taxon>Vertebrata</taxon>
        <taxon>Euteleostomi</taxon>
        <taxon>Mammalia</taxon>
        <taxon>Eutheria</taxon>
        <taxon>Euarchontoglires</taxon>
        <taxon>Primates</taxon>
        <taxon>Haplorrhini</taxon>
        <taxon>Catarrhini</taxon>
        <taxon>Hominidae</taxon>
        <taxon>Homo</taxon>
    </lineage>
</organism>
<protein>
    <recommendedName>
        <fullName evidence="7">GDP-Man:Man(3)GlcNAc(2)-PP-Dol alpha-1,2-mannosyltransferase</fullName>
        <ecNumber evidence="4">2.4.1.131</ecNumber>
    </recommendedName>
    <alternativeName>
        <fullName>Asparagine-linked glycosylation protein 11 homolog</fullName>
    </alternativeName>
    <alternativeName>
        <fullName>Glycolipid 2-alpha-mannosyltransferase</fullName>
    </alternativeName>
</protein>
<keyword id="KW-0900">Congenital disorder of glycosylation</keyword>
<keyword id="KW-0225">Disease variant</keyword>
<keyword id="KW-0256">Endoplasmic reticulum</keyword>
<keyword id="KW-0328">Glycosyltransferase</keyword>
<keyword id="KW-0472">Membrane</keyword>
<keyword id="KW-1267">Proteomics identification</keyword>
<keyword id="KW-1185">Reference proteome</keyword>
<keyword id="KW-0808">Transferase</keyword>
<keyword id="KW-0812">Transmembrane</keyword>
<keyword id="KW-1133">Transmembrane helix</keyword>
<gene>
    <name evidence="8" type="primary">ALG11</name>
    <name type="synonym">GT8</name>
</gene>
<name>ALG11_HUMAN</name>
<proteinExistence type="evidence at protein level"/>
<evidence type="ECO:0000250" key="1">
    <source>
        <dbReference type="UniProtKB" id="P53954"/>
    </source>
</evidence>
<evidence type="ECO:0000255" key="2"/>
<evidence type="ECO:0000269" key="3">
    <source>
    </source>
</evidence>
<evidence type="ECO:0000269" key="4">
    <source>
    </source>
</evidence>
<evidence type="ECO:0000269" key="5">
    <source>
    </source>
</evidence>
<evidence type="ECO:0000305" key="6"/>
<evidence type="ECO:0000305" key="7">
    <source>
    </source>
</evidence>
<evidence type="ECO:0000312" key="8">
    <source>
        <dbReference type="HGNC" id="HGNC:32456"/>
    </source>
</evidence>
<comment type="function">
    <text evidence="3 4">GDP-Man:Man(3)GlcNAc(2)-PP-Dol alpha-1,2-mannosyltransferase that operates in the biosynthetic pathway of dolichol-linked oligosaccharides, the glycan precursors employed in protein asparagine (N)-glycosylation. The assembly of dolichol-linked oligosaccharides begins on the cytosolic side of the endoplasmic reticulum membrane and finishes in its lumen. The sequential addition of sugars to dolichol pyrophosphate produces dolichol-linked oligosaccharides containing fourteen sugars, including two GlcNAcs, nine mannoses and three glucoses. Once assembled, the oligosaccharide is transferred from the lipid to nascent proteins by oligosaccharyltransferases. Catalyzes, on the cytoplasmic face of the endoplasmic reticulum, the addition of the fourth and fifth mannose residues to the dolichol-linked oligosaccharide chain, to produce Man(5)GlcNAc(2)-PP-dolichol core oligosaccharide (PubMed:20080937). Man(5)GlcNAc(2)-PP-dolichol is a substrate for ALG3, the following enzyme in the biosynthetic pathway (PubMed:10581255).</text>
</comment>
<comment type="catalytic activity">
    <reaction evidence="4">
        <text>an alpha-D-Man-(1-&gt;3)-[alpha-D-Man-(1-&gt;6)]-beta-D-Man-(1-&gt;4)-beta-D-GlcNAc-(1-&gt;4)-alpha-D-GlcNAc-diphospho-di-trans,poly-cis-dolichol + 2 GDP-alpha-D-mannose = an alpha-D-Man-(1-&gt;2)-alpha-D-Man-(1-&gt;2)-alpha-D-Man-(1-&gt;3)-[alpha-D-Man-(1-&gt;6)]-beta-D-Man-(1-&gt;4)-beta-D-GlcNAc-(1-&gt;4)-alpha-D-GlcNAc-diphospho-di-trans,poly-cis-dolichol + 2 GDP + 2 H(+)</text>
        <dbReference type="Rhea" id="RHEA:29523"/>
        <dbReference type="Rhea" id="RHEA-COMP:19515"/>
        <dbReference type="Rhea" id="RHEA-COMP:19516"/>
        <dbReference type="ChEBI" id="CHEBI:15378"/>
        <dbReference type="ChEBI" id="CHEBI:57527"/>
        <dbReference type="ChEBI" id="CHEBI:58189"/>
        <dbReference type="ChEBI" id="CHEBI:132511"/>
        <dbReference type="ChEBI" id="CHEBI:132515"/>
        <dbReference type="EC" id="2.4.1.131"/>
    </reaction>
    <physiologicalReaction direction="left-to-right" evidence="4">
        <dbReference type="Rhea" id="RHEA:29524"/>
    </physiologicalReaction>
</comment>
<comment type="pathway">
    <text evidence="4">Protein modification; protein glycosylation.</text>
</comment>
<comment type="interaction">
    <interactant intactId="EBI-1048799">
        <id>Q2TAA5</id>
    </interactant>
    <interactant intactId="EBI-2513305">
        <id>P06280</id>
        <label>GLA</label>
    </interactant>
    <organismsDiffer>false</organismsDiffer>
    <experiments>2</experiments>
</comment>
<comment type="subcellular location">
    <subcellularLocation>
        <location evidence="4">Endoplasmic reticulum membrane</location>
        <topology evidence="1">Single-pass membrane protein</topology>
    </subcellularLocation>
</comment>
<comment type="disease" evidence="4 5">
    <disease id="DI-02950">
        <name>Congenital disorder of glycosylation 1P</name>
        <acronym>CDG1P</acronym>
        <description>A form of congenital disorder of glycosylation, a multisystem disorder caused by a defect in glycoprotein biosynthesis and characterized by under-glycosylated serum glycoproteins. Congenital disorders of glycosylation result in a wide variety of clinical features, such as defects in the nervous system development, psychomotor retardation, dysmorphic features, hypotonia, coagulation disorders, and immunodeficiency. The broad spectrum of features reflects the critical role of N-glycoproteins during embryonic development, differentiation, and maintenance of cell functions.</description>
        <dbReference type="MIM" id="613661"/>
    </disease>
    <text>The disease is caused by variants affecting the gene represented in this entry.</text>
</comment>
<comment type="similarity">
    <text evidence="6">Belongs to the glycosyltransferase group 1 family. Glycosyltransferase 4 subfamily.</text>
</comment>
<comment type="sequence caution" evidence="6">
    <conflict type="frameshift">
        <sequence resource="EMBL-CDS" id="AAI11023"/>
    </conflict>
</comment>
<accession>Q2TAA5</accession>
<accession>A5PLP3</accession>
<accession>B4DKW9</accession>
<accession>Q5TAN9</accession>
<accession>Q6DKI6</accession>
<accession>Q96FI7</accession>
<reference key="1">
    <citation type="journal article" date="2004" name="Nat. Genet.">
        <title>Complete sequencing and characterization of 21,243 full-length human cDNAs.</title>
        <authorList>
            <person name="Ota T."/>
            <person name="Suzuki Y."/>
            <person name="Nishikawa T."/>
            <person name="Otsuki T."/>
            <person name="Sugiyama T."/>
            <person name="Irie R."/>
            <person name="Wakamatsu A."/>
            <person name="Hayashi K."/>
            <person name="Sato H."/>
            <person name="Nagai K."/>
            <person name="Kimura K."/>
            <person name="Makita H."/>
            <person name="Sekine M."/>
            <person name="Obayashi M."/>
            <person name="Nishi T."/>
            <person name="Shibahara T."/>
            <person name="Tanaka T."/>
            <person name="Ishii S."/>
            <person name="Yamamoto J."/>
            <person name="Saito K."/>
            <person name="Kawai Y."/>
            <person name="Isono Y."/>
            <person name="Nakamura Y."/>
            <person name="Nagahari K."/>
            <person name="Murakami K."/>
            <person name="Yasuda T."/>
            <person name="Iwayanagi T."/>
            <person name="Wagatsuma M."/>
            <person name="Shiratori A."/>
            <person name="Sudo H."/>
            <person name="Hosoiri T."/>
            <person name="Kaku Y."/>
            <person name="Kodaira H."/>
            <person name="Kondo H."/>
            <person name="Sugawara M."/>
            <person name="Takahashi M."/>
            <person name="Kanda K."/>
            <person name="Yokoi T."/>
            <person name="Furuya T."/>
            <person name="Kikkawa E."/>
            <person name="Omura Y."/>
            <person name="Abe K."/>
            <person name="Kamihara K."/>
            <person name="Katsuta N."/>
            <person name="Sato K."/>
            <person name="Tanikawa M."/>
            <person name="Yamazaki M."/>
            <person name="Ninomiya K."/>
            <person name="Ishibashi T."/>
            <person name="Yamashita H."/>
            <person name="Murakawa K."/>
            <person name="Fujimori K."/>
            <person name="Tanai H."/>
            <person name="Kimata M."/>
            <person name="Watanabe M."/>
            <person name="Hiraoka S."/>
            <person name="Chiba Y."/>
            <person name="Ishida S."/>
            <person name="Ono Y."/>
            <person name="Takiguchi S."/>
            <person name="Watanabe S."/>
            <person name="Yosida M."/>
            <person name="Hotuta T."/>
            <person name="Kusano J."/>
            <person name="Kanehori K."/>
            <person name="Takahashi-Fujii A."/>
            <person name="Hara H."/>
            <person name="Tanase T.-O."/>
            <person name="Nomura Y."/>
            <person name="Togiya S."/>
            <person name="Komai F."/>
            <person name="Hara R."/>
            <person name="Takeuchi K."/>
            <person name="Arita M."/>
            <person name="Imose N."/>
            <person name="Musashino K."/>
            <person name="Yuuki H."/>
            <person name="Oshima A."/>
            <person name="Sasaki N."/>
            <person name="Aotsuka S."/>
            <person name="Yoshikawa Y."/>
            <person name="Matsunawa H."/>
            <person name="Ichihara T."/>
            <person name="Shiohata N."/>
            <person name="Sano S."/>
            <person name="Moriya S."/>
            <person name="Momiyama H."/>
            <person name="Satoh N."/>
            <person name="Takami S."/>
            <person name="Terashima Y."/>
            <person name="Suzuki O."/>
            <person name="Nakagawa S."/>
            <person name="Senoh A."/>
            <person name="Mizoguchi H."/>
            <person name="Goto Y."/>
            <person name="Shimizu F."/>
            <person name="Wakebe H."/>
            <person name="Hishigaki H."/>
            <person name="Watanabe T."/>
            <person name="Sugiyama A."/>
            <person name="Takemoto M."/>
            <person name="Kawakami B."/>
            <person name="Yamazaki M."/>
            <person name="Watanabe K."/>
            <person name="Kumagai A."/>
            <person name="Itakura S."/>
            <person name="Fukuzumi Y."/>
            <person name="Fujimori Y."/>
            <person name="Komiyama M."/>
            <person name="Tashiro H."/>
            <person name="Tanigami A."/>
            <person name="Fujiwara T."/>
            <person name="Ono T."/>
            <person name="Yamada K."/>
            <person name="Fujii Y."/>
            <person name="Ozaki K."/>
            <person name="Hirao M."/>
            <person name="Ohmori Y."/>
            <person name="Kawabata A."/>
            <person name="Hikiji T."/>
            <person name="Kobatake N."/>
            <person name="Inagaki H."/>
            <person name="Ikema Y."/>
            <person name="Okamoto S."/>
            <person name="Okitani R."/>
            <person name="Kawakami T."/>
            <person name="Noguchi S."/>
            <person name="Itoh T."/>
            <person name="Shigeta K."/>
            <person name="Senba T."/>
            <person name="Matsumura K."/>
            <person name="Nakajima Y."/>
            <person name="Mizuno T."/>
            <person name="Morinaga M."/>
            <person name="Sasaki M."/>
            <person name="Togashi T."/>
            <person name="Oyama M."/>
            <person name="Hata H."/>
            <person name="Watanabe M."/>
            <person name="Komatsu T."/>
            <person name="Mizushima-Sugano J."/>
            <person name="Satoh T."/>
            <person name="Shirai Y."/>
            <person name="Takahashi Y."/>
            <person name="Nakagawa K."/>
            <person name="Okumura K."/>
            <person name="Nagase T."/>
            <person name="Nomura N."/>
            <person name="Kikuchi H."/>
            <person name="Masuho Y."/>
            <person name="Yamashita R."/>
            <person name="Nakai K."/>
            <person name="Yada T."/>
            <person name="Nakamura Y."/>
            <person name="Ohara O."/>
            <person name="Isogai T."/>
            <person name="Sugano S."/>
        </authorList>
    </citation>
    <scope>NUCLEOTIDE SEQUENCE [LARGE SCALE MRNA]</scope>
    <source>
        <tissue>Tongue</tissue>
    </source>
</reference>
<reference key="2">
    <citation type="journal article" date="2004" name="Nature">
        <title>The DNA sequence and analysis of human chromosome 13.</title>
        <authorList>
            <person name="Dunham A."/>
            <person name="Matthews L.H."/>
            <person name="Burton J."/>
            <person name="Ashurst J.L."/>
            <person name="Howe K.L."/>
            <person name="Ashcroft K.J."/>
            <person name="Beare D.M."/>
            <person name="Burford D.C."/>
            <person name="Hunt S.E."/>
            <person name="Griffiths-Jones S."/>
            <person name="Jones M.C."/>
            <person name="Keenan S.J."/>
            <person name="Oliver K."/>
            <person name="Scott C.E."/>
            <person name="Ainscough R."/>
            <person name="Almeida J.P."/>
            <person name="Ambrose K.D."/>
            <person name="Andrews D.T."/>
            <person name="Ashwell R.I.S."/>
            <person name="Babbage A.K."/>
            <person name="Bagguley C.L."/>
            <person name="Bailey J."/>
            <person name="Bannerjee R."/>
            <person name="Barlow K.F."/>
            <person name="Bates K."/>
            <person name="Beasley H."/>
            <person name="Bird C.P."/>
            <person name="Bray-Allen S."/>
            <person name="Brown A.J."/>
            <person name="Brown J.Y."/>
            <person name="Burrill W."/>
            <person name="Carder C."/>
            <person name="Carter N.P."/>
            <person name="Chapman J.C."/>
            <person name="Clamp M.E."/>
            <person name="Clark S.Y."/>
            <person name="Clarke G."/>
            <person name="Clee C.M."/>
            <person name="Clegg S.C."/>
            <person name="Cobley V."/>
            <person name="Collins J.E."/>
            <person name="Corby N."/>
            <person name="Coville G.J."/>
            <person name="Deloukas P."/>
            <person name="Dhami P."/>
            <person name="Dunham I."/>
            <person name="Dunn M."/>
            <person name="Earthrowl M.E."/>
            <person name="Ellington A.G."/>
            <person name="Faulkner L."/>
            <person name="Frankish A.G."/>
            <person name="Frankland J."/>
            <person name="French L."/>
            <person name="Garner P."/>
            <person name="Garnett J."/>
            <person name="Gilbert J.G.R."/>
            <person name="Gilson C.J."/>
            <person name="Ghori J."/>
            <person name="Grafham D.V."/>
            <person name="Gribble S.M."/>
            <person name="Griffiths C."/>
            <person name="Hall R.E."/>
            <person name="Hammond S."/>
            <person name="Harley J.L."/>
            <person name="Hart E.A."/>
            <person name="Heath P.D."/>
            <person name="Howden P.J."/>
            <person name="Huckle E.J."/>
            <person name="Hunt P.J."/>
            <person name="Hunt A.R."/>
            <person name="Johnson C."/>
            <person name="Johnson D."/>
            <person name="Kay M."/>
            <person name="Kimberley A.M."/>
            <person name="King A."/>
            <person name="Laird G.K."/>
            <person name="Langford C.J."/>
            <person name="Lawlor S."/>
            <person name="Leongamornlert D.A."/>
            <person name="Lloyd D.M."/>
            <person name="Lloyd C."/>
            <person name="Loveland J.E."/>
            <person name="Lovell J."/>
            <person name="Martin S."/>
            <person name="Mashreghi-Mohammadi M."/>
            <person name="McLaren S.J."/>
            <person name="McMurray A."/>
            <person name="Milne S."/>
            <person name="Moore M.J.F."/>
            <person name="Nickerson T."/>
            <person name="Palmer S.A."/>
            <person name="Pearce A.V."/>
            <person name="Peck A.I."/>
            <person name="Pelan S."/>
            <person name="Phillimore B."/>
            <person name="Porter K.M."/>
            <person name="Rice C.M."/>
            <person name="Searle S."/>
            <person name="Sehra H.K."/>
            <person name="Shownkeen R."/>
            <person name="Skuce C.D."/>
            <person name="Smith M."/>
            <person name="Steward C.A."/>
            <person name="Sycamore N."/>
            <person name="Tester J."/>
            <person name="Thomas D.W."/>
            <person name="Tracey A."/>
            <person name="Tromans A."/>
            <person name="Tubby B."/>
            <person name="Wall M."/>
            <person name="Wallis J.M."/>
            <person name="West A.P."/>
            <person name="Whitehead S.L."/>
            <person name="Willey D.L."/>
            <person name="Wilming L."/>
            <person name="Wray P.W."/>
            <person name="Wright M.W."/>
            <person name="Young L."/>
            <person name="Coulson A."/>
            <person name="Durbin R.M."/>
            <person name="Hubbard T."/>
            <person name="Sulston J.E."/>
            <person name="Beck S."/>
            <person name="Bentley D.R."/>
            <person name="Rogers J."/>
            <person name="Ross M.T."/>
        </authorList>
    </citation>
    <scope>NUCLEOTIDE SEQUENCE [LARGE SCALE GENOMIC DNA]</scope>
</reference>
<reference key="3">
    <citation type="journal article" date="2004" name="Genome Res.">
        <title>The status, quality, and expansion of the NIH full-length cDNA project: the Mammalian Gene Collection (MGC).</title>
        <authorList>
            <consortium name="The MGC Project Team"/>
        </authorList>
    </citation>
    <scope>NUCLEOTIDE SEQUENCE [LARGE SCALE MRNA]</scope>
    <source>
        <tissue>Lung</tissue>
        <tissue>Skin</tissue>
    </source>
</reference>
<reference key="4">
    <citation type="journal article" date="1999" name="EMBO J.">
        <title>Carbohydrate deficient glycoprotein syndrome type IV: deficiency of dolichyl-P-Man:Man(5)GlcNAc(2)-PP-dolichyl mannosyltransferase.</title>
        <authorList>
            <person name="Koerner C."/>
            <person name="Knauer R."/>
            <person name="Stephani U."/>
            <person name="Marquardt T."/>
            <person name="Lehle L."/>
            <person name="von Figura K."/>
        </authorList>
    </citation>
    <scope>FUNCTION</scope>
</reference>
<reference key="5">
    <citation type="journal article" date="2010" name="Hum. Mol. Genet.">
        <title>A severe human metabolic disease caused by deficiency of the endoplasmatic mannosyltransferase hALG11 leads to congenital disorder of glycosylation-Ip.</title>
        <authorList>
            <person name="Rind N."/>
            <person name="Schmeiser V."/>
            <person name="Thiel C."/>
            <person name="Absmanner B."/>
            <person name="Lubbehusen J."/>
            <person name="Hocks J."/>
            <person name="Apeshiotis N."/>
            <person name="Wilichowski E."/>
            <person name="Lehle L."/>
            <person name="Korner C."/>
        </authorList>
    </citation>
    <scope>FUNCTION</scope>
    <scope>CATALYTIC ACTIVITY</scope>
    <scope>PATHWAY</scope>
    <scope>SUBCELLULAR LOCATION</scope>
    <scope>VARIANT CDG1P SER-86</scope>
    <scope>CHARACTERIZATION OF VARIANT CDG1P SER-86</scope>
    <scope>MUTAGENESIS OF LEU-86</scope>
</reference>
<reference key="6">
    <citation type="journal article" date="2012" name="Hum. Mutat.">
        <title>Improved diagnostics lead to identification of three new patients with congenital disorder of glycosylation-Ip.</title>
        <authorList>
            <person name="Thiel C."/>
            <person name="Rind N."/>
            <person name="Popovici D."/>
            <person name="Hoffmann G.F."/>
            <person name="Hanson K."/>
            <person name="Conway R.L."/>
            <person name="Adamski C.R."/>
            <person name="Butler E."/>
            <person name="Scanlon R."/>
            <person name="Lambert M."/>
            <person name="Apeshiotis N."/>
            <person name="Thiels C."/>
            <person name="Matthijs G."/>
            <person name="Korner C."/>
        </authorList>
    </citation>
    <scope>VARIANTS CDG1P SER-279; PRO-318; SER-381 AND LYS-398</scope>
    <scope>CHARACTERIZATION OF VARIANTS CDG1P SER-279; PRO-318; SER-381 AND LYS-398</scope>
</reference>